<sequence length="181" mass="20859">MKQLLDFLPLVIFFAVYKFFDIYIASGALIAATALQLVISYLLYKKLEKMHLITFVMVTVFGSLTLILHDDSFIKWKVTIVYALFAIALGVSQIMNKPLLKSMLGKELIVEDKIWARVTWYWVSFFVVCGLVNIYVAFSLSQETWVNFKVFGLTALTLINTVLTVVYLFKNMSEEDRKELK</sequence>
<comment type="function">
    <text evidence="1">Plays a role in cell envelope biogenesis, maintenance of cell envelope integrity and membrane homeostasis.</text>
</comment>
<comment type="subcellular location">
    <subcellularLocation>
        <location evidence="1">Cell inner membrane</location>
        <topology evidence="1">Multi-pass membrane protein</topology>
    </subcellularLocation>
</comment>
<comment type="similarity">
    <text evidence="1">Belongs to the YciB family.</text>
</comment>
<gene>
    <name evidence="1" type="primary">yciB</name>
    <name type="ordered locus">Spea_1640</name>
</gene>
<accession>A8H328</accession>
<dbReference type="EMBL" id="CP000851">
    <property type="protein sequence ID" value="ABV86965.1"/>
    <property type="molecule type" value="Genomic_DNA"/>
</dbReference>
<dbReference type="RefSeq" id="WP_012154885.1">
    <property type="nucleotide sequence ID" value="NC_009901.1"/>
</dbReference>
<dbReference type="STRING" id="398579.Spea_1640"/>
<dbReference type="KEGG" id="spl:Spea_1640"/>
<dbReference type="eggNOG" id="COG2917">
    <property type="taxonomic scope" value="Bacteria"/>
</dbReference>
<dbReference type="HOGENOM" id="CLU_089554_2_0_6"/>
<dbReference type="OrthoDB" id="9788219at2"/>
<dbReference type="Proteomes" id="UP000002608">
    <property type="component" value="Chromosome"/>
</dbReference>
<dbReference type="GO" id="GO:0005886">
    <property type="term" value="C:plasma membrane"/>
    <property type="evidence" value="ECO:0007669"/>
    <property type="project" value="UniProtKB-SubCell"/>
</dbReference>
<dbReference type="HAMAP" id="MF_00189">
    <property type="entry name" value="YciB"/>
    <property type="match status" value="1"/>
</dbReference>
<dbReference type="InterPro" id="IPR006008">
    <property type="entry name" value="YciB"/>
</dbReference>
<dbReference type="NCBIfam" id="TIGR00997">
    <property type="entry name" value="ispZ"/>
    <property type="match status" value="1"/>
</dbReference>
<dbReference type="NCBIfam" id="NF001324">
    <property type="entry name" value="PRK00259.1-2"/>
    <property type="match status" value="1"/>
</dbReference>
<dbReference type="NCBIfam" id="NF001325">
    <property type="entry name" value="PRK00259.1-3"/>
    <property type="match status" value="1"/>
</dbReference>
<dbReference type="PANTHER" id="PTHR36917:SF1">
    <property type="entry name" value="INNER MEMBRANE-SPANNING PROTEIN YCIB"/>
    <property type="match status" value="1"/>
</dbReference>
<dbReference type="PANTHER" id="PTHR36917">
    <property type="entry name" value="INTRACELLULAR SEPTATION PROTEIN A-RELATED"/>
    <property type="match status" value="1"/>
</dbReference>
<dbReference type="Pfam" id="PF04279">
    <property type="entry name" value="IspA"/>
    <property type="match status" value="1"/>
</dbReference>
<evidence type="ECO:0000255" key="1">
    <source>
        <dbReference type="HAMAP-Rule" id="MF_00189"/>
    </source>
</evidence>
<protein>
    <recommendedName>
        <fullName evidence="1">Inner membrane-spanning protein YciB</fullName>
    </recommendedName>
</protein>
<name>YCIB_SHEPA</name>
<proteinExistence type="inferred from homology"/>
<feature type="chain" id="PRO_1000077495" description="Inner membrane-spanning protein YciB">
    <location>
        <begin position="1"/>
        <end position="181"/>
    </location>
</feature>
<feature type="transmembrane region" description="Helical" evidence="1">
    <location>
        <begin position="10"/>
        <end position="30"/>
    </location>
</feature>
<feature type="transmembrane region" description="Helical" evidence="1">
    <location>
        <begin position="50"/>
        <end position="70"/>
    </location>
</feature>
<feature type="transmembrane region" description="Helical" evidence="1">
    <location>
        <begin position="72"/>
        <end position="92"/>
    </location>
</feature>
<feature type="transmembrane region" description="Helical" evidence="1">
    <location>
        <begin position="118"/>
        <end position="138"/>
    </location>
</feature>
<feature type="transmembrane region" description="Helical" evidence="1">
    <location>
        <begin position="148"/>
        <end position="168"/>
    </location>
</feature>
<organism>
    <name type="scientific">Shewanella pealeana (strain ATCC 700345 / ANG-SQ1)</name>
    <dbReference type="NCBI Taxonomy" id="398579"/>
    <lineage>
        <taxon>Bacteria</taxon>
        <taxon>Pseudomonadati</taxon>
        <taxon>Pseudomonadota</taxon>
        <taxon>Gammaproteobacteria</taxon>
        <taxon>Alteromonadales</taxon>
        <taxon>Shewanellaceae</taxon>
        <taxon>Shewanella</taxon>
    </lineage>
</organism>
<keyword id="KW-0997">Cell inner membrane</keyword>
<keyword id="KW-1003">Cell membrane</keyword>
<keyword id="KW-0472">Membrane</keyword>
<keyword id="KW-1185">Reference proteome</keyword>
<keyword id="KW-0812">Transmembrane</keyword>
<keyword id="KW-1133">Transmembrane helix</keyword>
<reference key="1">
    <citation type="submission" date="2007-10" db="EMBL/GenBank/DDBJ databases">
        <title>Complete sequence of Shewanella pealeana ATCC 700345.</title>
        <authorList>
            <consortium name="US DOE Joint Genome Institute"/>
            <person name="Copeland A."/>
            <person name="Lucas S."/>
            <person name="Lapidus A."/>
            <person name="Barry K."/>
            <person name="Glavina del Rio T."/>
            <person name="Dalin E."/>
            <person name="Tice H."/>
            <person name="Pitluck S."/>
            <person name="Chertkov O."/>
            <person name="Brettin T."/>
            <person name="Bruce D."/>
            <person name="Detter J.C."/>
            <person name="Han C."/>
            <person name="Schmutz J."/>
            <person name="Larimer F."/>
            <person name="Land M."/>
            <person name="Hauser L."/>
            <person name="Kyrpides N."/>
            <person name="Kim E."/>
            <person name="Zhao J.-S.Z."/>
            <person name="Manno D."/>
            <person name="Hawari J."/>
            <person name="Richardson P."/>
        </authorList>
    </citation>
    <scope>NUCLEOTIDE SEQUENCE [LARGE SCALE GENOMIC DNA]</scope>
    <source>
        <strain>ATCC 700345 / ANG-SQ1</strain>
    </source>
</reference>